<feature type="chain" id="PRO_1000093648" description="DNA mismatch repair protein MutS">
    <location>
        <begin position="1"/>
        <end position="844"/>
    </location>
</feature>
<feature type="binding site" evidence="1">
    <location>
        <begin position="602"/>
        <end position="609"/>
    </location>
    <ligand>
        <name>ATP</name>
        <dbReference type="ChEBI" id="CHEBI:30616"/>
    </ligand>
</feature>
<gene>
    <name evidence="1" type="primary">mutS</name>
    <name type="ordered locus">SPG_2015</name>
</gene>
<evidence type="ECO:0000255" key="1">
    <source>
        <dbReference type="HAMAP-Rule" id="MF_00096"/>
    </source>
</evidence>
<organism>
    <name type="scientific">Streptococcus pneumoniae serotype 19F (strain G54)</name>
    <dbReference type="NCBI Taxonomy" id="512566"/>
    <lineage>
        <taxon>Bacteria</taxon>
        <taxon>Bacillati</taxon>
        <taxon>Bacillota</taxon>
        <taxon>Bacilli</taxon>
        <taxon>Lactobacillales</taxon>
        <taxon>Streptococcaceae</taxon>
        <taxon>Streptococcus</taxon>
    </lineage>
</organism>
<protein>
    <recommendedName>
        <fullName evidence="1">DNA mismatch repair protein MutS</fullName>
    </recommendedName>
</protein>
<reference key="1">
    <citation type="journal article" date="2001" name="Microb. Drug Resist.">
        <title>Annotated draft genomic sequence from a Streptococcus pneumoniae type 19F clinical isolate.</title>
        <authorList>
            <person name="Dopazo J."/>
            <person name="Mendoza A."/>
            <person name="Herrero J."/>
            <person name="Caldara F."/>
            <person name="Humbert Y."/>
            <person name="Friedli L."/>
            <person name="Guerrier M."/>
            <person name="Grand-Schenk E."/>
            <person name="Gandin C."/>
            <person name="de Francesco M."/>
            <person name="Polissi A."/>
            <person name="Buell G."/>
            <person name="Feger G."/>
            <person name="Garcia E."/>
            <person name="Peitsch M."/>
            <person name="Garcia-Bustos J.F."/>
        </authorList>
    </citation>
    <scope>NUCLEOTIDE SEQUENCE [LARGE SCALE GENOMIC DNA]</scope>
    <source>
        <strain>G54</strain>
    </source>
</reference>
<reference key="2">
    <citation type="submission" date="2008-03" db="EMBL/GenBank/DDBJ databases">
        <title>Pneumococcal beta glucoside metabolism investigated by whole genome comparison.</title>
        <authorList>
            <person name="Mulas L."/>
            <person name="Trappetti C."/>
            <person name="Hakenbeck R."/>
            <person name="Iannelli F."/>
            <person name="Pozzi G."/>
            <person name="Davidsen T.M."/>
            <person name="Tettelin H."/>
            <person name="Oggioni M."/>
        </authorList>
    </citation>
    <scope>NUCLEOTIDE SEQUENCE [LARGE SCALE GENOMIC DNA]</scope>
    <source>
        <strain>G54</strain>
    </source>
</reference>
<accession>B5E385</accession>
<proteinExistence type="inferred from homology"/>
<name>MUTS_STRP4</name>
<sequence>MAIEKLSPGMQQYVDIKKQYPDAFLLFRMGDFYELFYEDAVNAAQILEISLTSRNKNADNPIPMAGVPYHSAQQYIDVLIEQGYKVAIAEQMEDPKQAVGVVKREVVQVITPGTVVDSSKPDSQNNFLVSIDREGNQFGLAYMDLVTGDFYVTGLLDFTLVCGEIRNLKAREVVLGYDLSEEEEQILSRQMNLVLSYEKESFEDLHLLDLRLATVEQTASSKLLQYVHRTQMRELNHLKPVIRYEIKDFLQMDYATKASLDLVENARSGKKQGSLFWLLDETKTAMGMRLLRSWIHRPLIDKERIVQRQEVVQVFLDHFFERSDLTDSLKGVYDIERLASRVSFGKTNPKDLLQLATTLSSVPRIRAILEGMEQPTLAYLIAQLDAIPELESLISAAIAPEAPHVITDGGIIRTGFDETLDKYXCVXREGTSWIAEIEAKERENSGISTLKIDYNKKDGYYFHVTNSQLGNVPAHFFRKATLKNSERFGTEELARIEGDMLEAREKSANLEYEIFMRIREEVGKYIQRLQALAQGIATVDVLQSLAVVAETQHLIRPEFGDDSQIDIRKGRHAVVEKVMGAQTYIPNTIQMAEDTSIQLITGPNMSGKSTYMRQLAMTAVMAQLGSYVPAESAHLPIFDAIFTRIGAADDLVSGQSTFMVEMMEANNAISHATKNSLILFDELGRGTATYDGMALAQSIIEYIHEHIGAKTLFATHYHELTSLESSLQHLVNVHVATLEQDGQVTFLHKIEPGPADKSXGIHVAKIAGLPADLLARADKILXQLENQGTESPPPMRQTSAVTEHISLFDRAEEHPILAELAKLDVYNMTPMQVMNVLVELKQKL</sequence>
<dbReference type="EMBL" id="CP001015">
    <property type="protein sequence ID" value="ACF55520.1"/>
    <property type="molecule type" value="Genomic_DNA"/>
</dbReference>
<dbReference type="KEGG" id="spx:SPG_2015"/>
<dbReference type="HOGENOM" id="CLU_002472_3_1_9"/>
<dbReference type="GO" id="GO:0005829">
    <property type="term" value="C:cytosol"/>
    <property type="evidence" value="ECO:0007669"/>
    <property type="project" value="TreeGrafter"/>
</dbReference>
<dbReference type="GO" id="GO:0005524">
    <property type="term" value="F:ATP binding"/>
    <property type="evidence" value="ECO:0007669"/>
    <property type="project" value="UniProtKB-UniRule"/>
</dbReference>
<dbReference type="GO" id="GO:0140664">
    <property type="term" value="F:ATP-dependent DNA damage sensor activity"/>
    <property type="evidence" value="ECO:0007669"/>
    <property type="project" value="InterPro"/>
</dbReference>
<dbReference type="GO" id="GO:0003684">
    <property type="term" value="F:damaged DNA binding"/>
    <property type="evidence" value="ECO:0007669"/>
    <property type="project" value="UniProtKB-UniRule"/>
</dbReference>
<dbReference type="GO" id="GO:0030983">
    <property type="term" value="F:mismatched DNA binding"/>
    <property type="evidence" value="ECO:0007669"/>
    <property type="project" value="InterPro"/>
</dbReference>
<dbReference type="GO" id="GO:0006298">
    <property type="term" value="P:mismatch repair"/>
    <property type="evidence" value="ECO:0007669"/>
    <property type="project" value="UniProtKB-UniRule"/>
</dbReference>
<dbReference type="CDD" id="cd03284">
    <property type="entry name" value="ABC_MutS1"/>
    <property type="match status" value="1"/>
</dbReference>
<dbReference type="FunFam" id="1.10.1420.10:FF:000018">
    <property type="entry name" value="DNA mismatch repair protein MutS"/>
    <property type="match status" value="1"/>
</dbReference>
<dbReference type="FunFam" id="3.30.420.110:FF:000015">
    <property type="entry name" value="DNA mismatch repair protein MutS"/>
    <property type="match status" value="1"/>
</dbReference>
<dbReference type="FunFam" id="3.40.1170.10:FF:000001">
    <property type="entry name" value="DNA mismatch repair protein MutS"/>
    <property type="match status" value="1"/>
</dbReference>
<dbReference type="FunFam" id="3.40.50.300:FF:000896">
    <property type="entry name" value="DNA mismatch repair protein MutS"/>
    <property type="match status" value="1"/>
</dbReference>
<dbReference type="Gene3D" id="1.10.1420.10">
    <property type="match status" value="2"/>
</dbReference>
<dbReference type="Gene3D" id="3.40.1170.10">
    <property type="entry name" value="DNA repair protein MutS, domain I"/>
    <property type="match status" value="1"/>
</dbReference>
<dbReference type="Gene3D" id="3.30.420.110">
    <property type="entry name" value="MutS, connector domain"/>
    <property type="match status" value="1"/>
</dbReference>
<dbReference type="Gene3D" id="3.40.50.300">
    <property type="entry name" value="P-loop containing nucleotide triphosphate hydrolases"/>
    <property type="match status" value="1"/>
</dbReference>
<dbReference type="HAMAP" id="MF_00096">
    <property type="entry name" value="MutS"/>
    <property type="match status" value="1"/>
</dbReference>
<dbReference type="InterPro" id="IPR005748">
    <property type="entry name" value="DNA_mismatch_repair_MutS"/>
</dbReference>
<dbReference type="InterPro" id="IPR007695">
    <property type="entry name" value="DNA_mismatch_repair_MutS-lik_N"/>
</dbReference>
<dbReference type="InterPro" id="IPR017261">
    <property type="entry name" value="DNA_mismatch_repair_MutS/MSH"/>
</dbReference>
<dbReference type="InterPro" id="IPR000432">
    <property type="entry name" value="DNA_mismatch_repair_MutS_C"/>
</dbReference>
<dbReference type="InterPro" id="IPR007861">
    <property type="entry name" value="DNA_mismatch_repair_MutS_clamp"/>
</dbReference>
<dbReference type="InterPro" id="IPR007696">
    <property type="entry name" value="DNA_mismatch_repair_MutS_core"/>
</dbReference>
<dbReference type="InterPro" id="IPR016151">
    <property type="entry name" value="DNA_mismatch_repair_MutS_N"/>
</dbReference>
<dbReference type="InterPro" id="IPR036187">
    <property type="entry name" value="DNA_mismatch_repair_MutS_sf"/>
</dbReference>
<dbReference type="InterPro" id="IPR007860">
    <property type="entry name" value="DNA_mmatch_repair_MutS_con_dom"/>
</dbReference>
<dbReference type="InterPro" id="IPR045076">
    <property type="entry name" value="MutS"/>
</dbReference>
<dbReference type="InterPro" id="IPR036678">
    <property type="entry name" value="MutS_con_dom_sf"/>
</dbReference>
<dbReference type="InterPro" id="IPR027417">
    <property type="entry name" value="P-loop_NTPase"/>
</dbReference>
<dbReference type="NCBIfam" id="TIGR01070">
    <property type="entry name" value="mutS1"/>
    <property type="match status" value="1"/>
</dbReference>
<dbReference type="NCBIfam" id="NF003810">
    <property type="entry name" value="PRK05399.1"/>
    <property type="match status" value="1"/>
</dbReference>
<dbReference type="PANTHER" id="PTHR11361:SF34">
    <property type="entry name" value="DNA MISMATCH REPAIR PROTEIN MSH1, MITOCHONDRIAL"/>
    <property type="match status" value="1"/>
</dbReference>
<dbReference type="PANTHER" id="PTHR11361">
    <property type="entry name" value="DNA MISMATCH REPAIR PROTEIN MUTS FAMILY MEMBER"/>
    <property type="match status" value="1"/>
</dbReference>
<dbReference type="Pfam" id="PF01624">
    <property type="entry name" value="MutS_I"/>
    <property type="match status" value="1"/>
</dbReference>
<dbReference type="Pfam" id="PF05188">
    <property type="entry name" value="MutS_II"/>
    <property type="match status" value="1"/>
</dbReference>
<dbReference type="Pfam" id="PF05192">
    <property type="entry name" value="MutS_III"/>
    <property type="match status" value="1"/>
</dbReference>
<dbReference type="Pfam" id="PF05190">
    <property type="entry name" value="MutS_IV"/>
    <property type="match status" value="1"/>
</dbReference>
<dbReference type="Pfam" id="PF00488">
    <property type="entry name" value="MutS_V"/>
    <property type="match status" value="1"/>
</dbReference>
<dbReference type="PIRSF" id="PIRSF037677">
    <property type="entry name" value="DNA_mis_repair_Msh6"/>
    <property type="match status" value="1"/>
</dbReference>
<dbReference type="SMART" id="SM00534">
    <property type="entry name" value="MUTSac"/>
    <property type="match status" value="1"/>
</dbReference>
<dbReference type="SMART" id="SM00533">
    <property type="entry name" value="MUTSd"/>
    <property type="match status" value="1"/>
</dbReference>
<dbReference type="SUPFAM" id="SSF55271">
    <property type="entry name" value="DNA repair protein MutS, domain I"/>
    <property type="match status" value="1"/>
</dbReference>
<dbReference type="SUPFAM" id="SSF53150">
    <property type="entry name" value="DNA repair protein MutS, domain II"/>
    <property type="match status" value="1"/>
</dbReference>
<dbReference type="SUPFAM" id="SSF48334">
    <property type="entry name" value="DNA repair protein MutS, domain III"/>
    <property type="match status" value="1"/>
</dbReference>
<dbReference type="SUPFAM" id="SSF52540">
    <property type="entry name" value="P-loop containing nucleoside triphosphate hydrolases"/>
    <property type="match status" value="1"/>
</dbReference>
<dbReference type="PROSITE" id="PS00486">
    <property type="entry name" value="DNA_MISMATCH_REPAIR_2"/>
    <property type="match status" value="1"/>
</dbReference>
<keyword id="KW-0067">ATP-binding</keyword>
<keyword id="KW-0227">DNA damage</keyword>
<keyword id="KW-0234">DNA repair</keyword>
<keyword id="KW-0238">DNA-binding</keyword>
<keyword id="KW-0547">Nucleotide-binding</keyword>
<comment type="function">
    <text evidence="1">This protein is involved in the repair of mismatches in DNA. It is possible that it carries out the mismatch recognition step. This protein has a weak ATPase activity.</text>
</comment>
<comment type="similarity">
    <text evidence="1">Belongs to the DNA mismatch repair MutS family.</text>
</comment>